<evidence type="ECO:0000255" key="1"/>
<evidence type="ECO:0000305" key="2"/>
<proteinExistence type="inferred from homology"/>
<name>Y2481_STAAM</name>
<comment type="subcellular location">
    <subcellularLocation>
        <location evidence="2">Cell membrane</location>
        <topology evidence="2">Single-pass membrane protein</topology>
    </subcellularLocation>
</comment>
<comment type="similarity">
    <text evidence="2">Belongs to the staphylococcal tandem lipoprotein family.</text>
</comment>
<protein>
    <recommendedName>
        <fullName>Uncharacterized protein SAV2481</fullName>
    </recommendedName>
</protein>
<organism>
    <name type="scientific">Staphylococcus aureus (strain Mu50 / ATCC 700699)</name>
    <dbReference type="NCBI Taxonomy" id="158878"/>
    <lineage>
        <taxon>Bacteria</taxon>
        <taxon>Bacillati</taxon>
        <taxon>Bacillota</taxon>
        <taxon>Bacilli</taxon>
        <taxon>Bacillales</taxon>
        <taxon>Staphylococcaceae</taxon>
        <taxon>Staphylococcus</taxon>
    </lineage>
</organism>
<reference key="1">
    <citation type="journal article" date="2001" name="Lancet">
        <title>Whole genome sequencing of meticillin-resistant Staphylococcus aureus.</title>
        <authorList>
            <person name="Kuroda M."/>
            <person name="Ohta T."/>
            <person name="Uchiyama I."/>
            <person name="Baba T."/>
            <person name="Yuzawa H."/>
            <person name="Kobayashi I."/>
            <person name="Cui L."/>
            <person name="Oguchi A."/>
            <person name="Aoki K."/>
            <person name="Nagai Y."/>
            <person name="Lian J.-Q."/>
            <person name="Ito T."/>
            <person name="Kanamori M."/>
            <person name="Matsumaru H."/>
            <person name="Maruyama A."/>
            <person name="Murakami H."/>
            <person name="Hosoyama A."/>
            <person name="Mizutani-Ui Y."/>
            <person name="Takahashi N.K."/>
            <person name="Sawano T."/>
            <person name="Inoue R."/>
            <person name="Kaito C."/>
            <person name="Sekimizu K."/>
            <person name="Hirakawa H."/>
            <person name="Kuhara S."/>
            <person name="Goto S."/>
            <person name="Yabuzaki J."/>
            <person name="Kanehisa M."/>
            <person name="Yamashita A."/>
            <person name="Oshima K."/>
            <person name="Furuya K."/>
            <person name="Yoshino C."/>
            <person name="Shiba T."/>
            <person name="Hattori M."/>
            <person name="Ogasawara N."/>
            <person name="Hayashi H."/>
            <person name="Hiramatsu K."/>
        </authorList>
    </citation>
    <scope>NUCLEOTIDE SEQUENCE [LARGE SCALE GENOMIC DNA]</scope>
    <source>
        <strain>Mu50 / ATCC 700699</strain>
    </source>
</reference>
<feature type="chain" id="PRO_0000282119" description="Uncharacterized protein SAV2481">
    <location>
        <begin position="1"/>
        <end position="264"/>
    </location>
</feature>
<feature type="transmembrane region" description="Helical" evidence="1">
    <location>
        <begin position="7"/>
        <end position="27"/>
    </location>
</feature>
<keyword id="KW-1003">Cell membrane</keyword>
<keyword id="KW-0472">Membrane</keyword>
<keyword id="KW-0812">Transmembrane</keyword>
<keyword id="KW-1133">Transmembrane helix</keyword>
<sequence length="264" mass="30748">MIHSKKLTLGICLVLLIILIVGYVIMTKTNGRNAQIKDTFNQTLKLYPTKNLDDFYDKEGFRDQEFKKGDKGTWIVNSEMVIEPKGKDMETRGMVLYINRNTRTTKGYYFISEMTDDSNGRPKDDEKRYPVKMEHNKIIPTKPLPNDKLRKEIENFKFFVQYGDFKDINDYKDGDISYNPNVPSYSAKYQLKNDDYNVKQLRKRYNIPTNKAPKLLIKGDGDLKGSSVGSKNLEFTFVENKEENIYFTDSVQYTSSEDTSYESN</sequence>
<dbReference type="EMBL" id="BA000017">
    <property type="protein sequence ID" value="BAB58643.1"/>
    <property type="molecule type" value="Genomic_DNA"/>
</dbReference>
<dbReference type="RefSeq" id="WP_000581894.1">
    <property type="nucleotide sequence ID" value="NC_002758.2"/>
</dbReference>
<dbReference type="SMR" id="Q99RF2"/>
<dbReference type="DNASU" id="1122506"/>
<dbReference type="KEGG" id="sav:SAV2481"/>
<dbReference type="HOGENOM" id="CLU_071589_0_1_9"/>
<dbReference type="PhylomeDB" id="Q99RF2"/>
<dbReference type="Proteomes" id="UP000002481">
    <property type="component" value="Chromosome"/>
</dbReference>
<dbReference type="GO" id="GO:0005886">
    <property type="term" value="C:plasma membrane"/>
    <property type="evidence" value="ECO:0007669"/>
    <property type="project" value="UniProtKB-SubCell"/>
</dbReference>
<dbReference type="Gene3D" id="2.50.20.40">
    <property type="match status" value="1"/>
</dbReference>
<dbReference type="InterPro" id="IPR007595">
    <property type="entry name" value="Csa"/>
</dbReference>
<dbReference type="InterPro" id="IPR038641">
    <property type="entry name" value="Csa_sf"/>
</dbReference>
<dbReference type="NCBIfam" id="TIGR01742">
    <property type="entry name" value="SA_tandem_lipo"/>
    <property type="match status" value="1"/>
</dbReference>
<dbReference type="Pfam" id="PF04507">
    <property type="entry name" value="DUF576"/>
    <property type="match status" value="1"/>
</dbReference>
<gene>
    <name type="ordered locus">SAV2481</name>
</gene>
<accession>Q99RF2</accession>